<protein>
    <recommendedName>
        <fullName evidence="2">HTH-type transcriptional regulator BetI</fullName>
    </recommendedName>
</protein>
<name>BETI_RHIME</name>
<organism>
    <name type="scientific">Rhizobium meliloti (strain 1021)</name>
    <name type="common">Ensifer meliloti</name>
    <name type="synonym">Sinorhizobium meliloti</name>
    <dbReference type="NCBI Taxonomy" id="266834"/>
    <lineage>
        <taxon>Bacteria</taxon>
        <taxon>Pseudomonadati</taxon>
        <taxon>Pseudomonadota</taxon>
        <taxon>Alphaproteobacteria</taxon>
        <taxon>Hyphomicrobiales</taxon>
        <taxon>Rhizobiaceae</taxon>
        <taxon>Sinorhizobium/Ensifer group</taxon>
        <taxon>Sinorhizobium</taxon>
    </lineage>
</organism>
<comment type="function">
    <text evidence="1">Repressor involved in the biosynthesis of the osmoprotectant glycine betaine. It represses transcription of the choline transporter BetT and the genes of BetAB involved in the synthesis of glycine betaine (By similarity).</text>
</comment>
<comment type="pathway">
    <text>Amine and polyamine biosynthesis; betaine biosynthesis via choline pathway [regulation].</text>
</comment>
<evidence type="ECO:0000250" key="1"/>
<evidence type="ECO:0000255" key="2">
    <source>
        <dbReference type="HAMAP-Rule" id="MF_00768"/>
    </source>
</evidence>
<accession>O69786</accession>
<keyword id="KW-0238">DNA-binding</keyword>
<keyword id="KW-1185">Reference proteome</keyword>
<keyword id="KW-0678">Repressor</keyword>
<keyword id="KW-0804">Transcription</keyword>
<keyword id="KW-0805">Transcription regulation</keyword>
<sequence length="203" mass="22040">MPKVGMEPVRRKALVDAALRVIGDQGTLAVTMSEIARTAGVSPALAHHYFGSKEQLLIATIRSLLGKLRDDAVAAMKAAATPRERVSALIRVSFRADQFAPETVAAWLAFYSEAQRSEEVRRLLVIYARRLRSNLLVGLRALCPADDAERIAEGAAAMIDGLYIRQSLKSAPISIEASVALTEDYVNAHLRANGDGKYPSPRV</sequence>
<reference key="1">
    <citation type="journal article" date="1998" name="Proc. Natl. Acad. Sci. U.S.A.">
        <title>Presence of a gene encoding choline sulfatase in Sinorhizobium meliloti bet operon: choline-O-sulfate is metabolized into glycine betaine.</title>
        <authorList>
            <person name="Oesteras M."/>
            <person name="Boncompagni E."/>
            <person name="Vincent N."/>
            <person name="Poggi M.-C."/>
            <person name="Le Rudulier D."/>
        </authorList>
    </citation>
    <scope>NUCLEOTIDE SEQUENCE [GENOMIC DNA]</scope>
    <source>
        <strain>102F34</strain>
    </source>
</reference>
<reference key="2">
    <citation type="journal article" date="2001" name="Proc. Natl. Acad. Sci. U.S.A.">
        <title>Analysis of the chromosome sequence of the legume symbiont Sinorhizobium meliloti strain 1021.</title>
        <authorList>
            <person name="Capela D."/>
            <person name="Barloy-Hubler F."/>
            <person name="Gouzy J."/>
            <person name="Bothe G."/>
            <person name="Ampe F."/>
            <person name="Batut J."/>
            <person name="Boistard P."/>
            <person name="Becker A."/>
            <person name="Boutry M."/>
            <person name="Cadieu E."/>
            <person name="Dreano S."/>
            <person name="Gloux S."/>
            <person name="Godrie T."/>
            <person name="Goffeau A."/>
            <person name="Kahn D."/>
            <person name="Kiss E."/>
            <person name="Lelaure V."/>
            <person name="Masuy D."/>
            <person name="Pohl T."/>
            <person name="Portetelle D."/>
            <person name="Puehler A."/>
            <person name="Purnelle B."/>
            <person name="Ramsperger U."/>
            <person name="Renard C."/>
            <person name="Thebault P."/>
            <person name="Vandenbol M."/>
            <person name="Weidner S."/>
            <person name="Galibert F."/>
        </authorList>
    </citation>
    <scope>NUCLEOTIDE SEQUENCE [LARGE SCALE GENOMIC DNA]</scope>
    <source>
        <strain>1021</strain>
    </source>
</reference>
<reference key="3">
    <citation type="journal article" date="2001" name="Science">
        <title>The composite genome of the legume symbiont Sinorhizobium meliloti.</title>
        <authorList>
            <person name="Galibert F."/>
            <person name="Finan T.M."/>
            <person name="Long S.R."/>
            <person name="Puehler A."/>
            <person name="Abola P."/>
            <person name="Ampe F."/>
            <person name="Barloy-Hubler F."/>
            <person name="Barnett M.J."/>
            <person name="Becker A."/>
            <person name="Boistard P."/>
            <person name="Bothe G."/>
            <person name="Boutry M."/>
            <person name="Bowser L."/>
            <person name="Buhrmester J."/>
            <person name="Cadieu E."/>
            <person name="Capela D."/>
            <person name="Chain P."/>
            <person name="Cowie A."/>
            <person name="Davis R.W."/>
            <person name="Dreano S."/>
            <person name="Federspiel N.A."/>
            <person name="Fisher R.F."/>
            <person name="Gloux S."/>
            <person name="Godrie T."/>
            <person name="Goffeau A."/>
            <person name="Golding B."/>
            <person name="Gouzy J."/>
            <person name="Gurjal M."/>
            <person name="Hernandez-Lucas I."/>
            <person name="Hong A."/>
            <person name="Huizar L."/>
            <person name="Hyman R.W."/>
            <person name="Jones T."/>
            <person name="Kahn D."/>
            <person name="Kahn M.L."/>
            <person name="Kalman S."/>
            <person name="Keating D.H."/>
            <person name="Kiss E."/>
            <person name="Komp C."/>
            <person name="Lelaure V."/>
            <person name="Masuy D."/>
            <person name="Palm C."/>
            <person name="Peck M.C."/>
            <person name="Pohl T.M."/>
            <person name="Portetelle D."/>
            <person name="Purnelle B."/>
            <person name="Ramsperger U."/>
            <person name="Surzycki R."/>
            <person name="Thebault P."/>
            <person name="Vandenbol M."/>
            <person name="Vorhoelter F.J."/>
            <person name="Weidner S."/>
            <person name="Wells D.H."/>
            <person name="Wong K."/>
            <person name="Yeh K.-C."/>
            <person name="Batut J."/>
        </authorList>
    </citation>
    <scope>NUCLEOTIDE SEQUENCE [LARGE SCALE GENOMIC DNA]</scope>
    <source>
        <strain>1021</strain>
    </source>
</reference>
<gene>
    <name evidence="2" type="primary">betI</name>
    <name type="ordered locus">R00950</name>
    <name type="ORF">SMc00095</name>
</gene>
<dbReference type="EMBL" id="U39940">
    <property type="protein sequence ID" value="AAC13370.1"/>
    <property type="molecule type" value="Genomic_DNA"/>
</dbReference>
<dbReference type="EMBL" id="AL591688">
    <property type="protein sequence ID" value="CAC45522.1"/>
    <property type="molecule type" value="Genomic_DNA"/>
</dbReference>
<dbReference type="RefSeq" id="NP_385056.1">
    <property type="nucleotide sequence ID" value="NC_003047.1"/>
</dbReference>
<dbReference type="RefSeq" id="WP_010968943.1">
    <property type="nucleotide sequence ID" value="NC_003047.1"/>
</dbReference>
<dbReference type="SMR" id="O69786"/>
<dbReference type="EnsemblBacteria" id="CAC45522">
    <property type="protein sequence ID" value="CAC45522"/>
    <property type="gene ID" value="SMc00095"/>
</dbReference>
<dbReference type="KEGG" id="sme:SMc00095"/>
<dbReference type="PATRIC" id="fig|266834.11.peg.2349"/>
<dbReference type="eggNOG" id="COG1309">
    <property type="taxonomic scope" value="Bacteria"/>
</dbReference>
<dbReference type="HOGENOM" id="CLU_069356_15_4_5"/>
<dbReference type="OrthoDB" id="7618612at2"/>
<dbReference type="UniPathway" id="UPA00529"/>
<dbReference type="Proteomes" id="UP000001976">
    <property type="component" value="Chromosome"/>
</dbReference>
<dbReference type="GO" id="GO:0003700">
    <property type="term" value="F:DNA-binding transcription factor activity"/>
    <property type="evidence" value="ECO:0007669"/>
    <property type="project" value="UniProtKB-UniRule"/>
</dbReference>
<dbReference type="GO" id="GO:0000976">
    <property type="term" value="F:transcription cis-regulatory region binding"/>
    <property type="evidence" value="ECO:0007669"/>
    <property type="project" value="TreeGrafter"/>
</dbReference>
<dbReference type="GO" id="GO:0019285">
    <property type="term" value="P:glycine betaine biosynthetic process from choline"/>
    <property type="evidence" value="ECO:0007669"/>
    <property type="project" value="UniProtKB-UniRule"/>
</dbReference>
<dbReference type="GO" id="GO:0045892">
    <property type="term" value="P:negative regulation of DNA-templated transcription"/>
    <property type="evidence" value="ECO:0007669"/>
    <property type="project" value="UniProtKB-UniRule"/>
</dbReference>
<dbReference type="Gene3D" id="1.10.357.10">
    <property type="entry name" value="Tetracycline Repressor, domain 2"/>
    <property type="match status" value="1"/>
</dbReference>
<dbReference type="HAMAP" id="MF_00768">
    <property type="entry name" value="HTH_type_BetI"/>
    <property type="match status" value="1"/>
</dbReference>
<dbReference type="InterPro" id="IPR039538">
    <property type="entry name" value="BetI_C"/>
</dbReference>
<dbReference type="InterPro" id="IPR009057">
    <property type="entry name" value="Homeodomain-like_sf"/>
</dbReference>
<dbReference type="InterPro" id="IPR050109">
    <property type="entry name" value="HTH-type_TetR-like_transc_reg"/>
</dbReference>
<dbReference type="InterPro" id="IPR001647">
    <property type="entry name" value="HTH_TetR"/>
</dbReference>
<dbReference type="InterPro" id="IPR036271">
    <property type="entry name" value="Tet_transcr_reg_TetR-rel_C_sf"/>
</dbReference>
<dbReference type="InterPro" id="IPR017757">
    <property type="entry name" value="Tscrpt_rep_BetI"/>
</dbReference>
<dbReference type="NCBIfam" id="TIGR03384">
    <property type="entry name" value="betaine_BetI"/>
    <property type="match status" value="1"/>
</dbReference>
<dbReference type="NCBIfam" id="NF001978">
    <property type="entry name" value="PRK00767.1"/>
    <property type="match status" value="1"/>
</dbReference>
<dbReference type="PANTHER" id="PTHR30055:SF234">
    <property type="entry name" value="HTH-TYPE TRANSCRIPTIONAL REGULATOR BETI"/>
    <property type="match status" value="1"/>
</dbReference>
<dbReference type="PANTHER" id="PTHR30055">
    <property type="entry name" value="HTH-TYPE TRANSCRIPTIONAL REGULATOR RUTR"/>
    <property type="match status" value="1"/>
</dbReference>
<dbReference type="Pfam" id="PF13977">
    <property type="entry name" value="TetR_C_6"/>
    <property type="match status" value="1"/>
</dbReference>
<dbReference type="Pfam" id="PF00440">
    <property type="entry name" value="TetR_N"/>
    <property type="match status" value="1"/>
</dbReference>
<dbReference type="PRINTS" id="PR00455">
    <property type="entry name" value="HTHTETR"/>
</dbReference>
<dbReference type="SUPFAM" id="SSF46689">
    <property type="entry name" value="Homeodomain-like"/>
    <property type="match status" value="1"/>
</dbReference>
<dbReference type="SUPFAM" id="SSF48498">
    <property type="entry name" value="Tetracyclin repressor-like, C-terminal domain"/>
    <property type="match status" value="1"/>
</dbReference>
<dbReference type="PROSITE" id="PS50977">
    <property type="entry name" value="HTH_TETR_2"/>
    <property type="match status" value="1"/>
</dbReference>
<feature type="chain" id="PRO_0000070587" description="HTH-type transcriptional regulator BetI">
    <location>
        <begin position="1"/>
        <end position="203"/>
    </location>
</feature>
<feature type="domain" description="HTH tetR-type" evidence="2">
    <location>
        <begin position="8"/>
        <end position="68"/>
    </location>
</feature>
<feature type="DNA-binding region" description="H-T-H motif" evidence="2">
    <location>
        <begin position="31"/>
        <end position="50"/>
    </location>
</feature>
<proteinExistence type="inferred from homology"/>